<accession>P17419</accession>
<name>FIMCH_DICNO</name>
<proteinExistence type="predicted"/>
<sequence length="244" mass="27961">MSRNIDFSAFQLKVIAIIAMSLDHSALLFLSDGSWRYECLRFVGRLTLPLMCFFLVEGFFHSRNHQKYLGRLLFFGVIAQPFYSWMIAFDQIDSADLRFFLQTGNVLFTLALALLALMIRASRLSVPLKITLIFALSFAALYCDWGIYPVIFTLVLAHYYPERKAQTIAYLLAAMGLLLLADRQIFAVMPSLVLHIMPAGILLPPLFWHFYHGKKGARFGGRYAFYLFYPVHIALLCSAKMFLQ</sequence>
<reference key="1">
    <citation type="journal article" date="1991" name="Mol. Microbiol.">
        <title>Organization of the fimbrial gene region of Bacteroides nodosus: class I and class II strains.</title>
        <authorList>
            <person name="Hobbs M."/>
            <person name="Dalrymple B.P."/>
            <person name="Cox P.T."/>
            <person name="Livingstone S.P."/>
            <person name="Delaney S.F."/>
            <person name="Mattick J.S."/>
        </authorList>
    </citation>
    <scope>NUCLEOTIDE SEQUENCE [GENOMIC DNA]</scope>
    <source>
        <strain>Serogroup H1 isolate VCS1215</strain>
    </source>
</reference>
<keyword id="KW-1029">Fimbrium biogenesis</keyword>
<protein>
    <recommendedName>
        <fullName>Probable fimbrial assembly protein FimC, serogroup H1</fullName>
    </recommendedName>
</protein>
<gene>
    <name type="primary">fimC</name>
</gene>
<organism>
    <name type="scientific">Dichelobacter nodosus</name>
    <name type="common">Bacteroides nodosus</name>
    <dbReference type="NCBI Taxonomy" id="870"/>
    <lineage>
        <taxon>Bacteria</taxon>
        <taxon>Pseudomonadati</taxon>
        <taxon>Pseudomonadota</taxon>
        <taxon>Gammaproteobacteria</taxon>
        <taxon>Cardiobacteriales</taxon>
        <taxon>Cardiobacteriaceae</taxon>
        <taxon>Dichelobacter</taxon>
    </lineage>
</organism>
<dbReference type="EMBL" id="X52390">
    <property type="protein sequence ID" value="CAA36620.1"/>
    <property type="molecule type" value="Genomic_DNA"/>
</dbReference>
<dbReference type="PIR" id="S15250">
    <property type="entry name" value="YQBZCH"/>
</dbReference>
<dbReference type="InterPro" id="IPR008875">
    <property type="entry name" value="TraX"/>
</dbReference>
<dbReference type="Pfam" id="PF05857">
    <property type="entry name" value="TraX"/>
    <property type="match status" value="1"/>
</dbReference>
<feature type="chain" id="PRO_0000087252" description="Probable fimbrial assembly protein FimC, serogroup H1">
    <location>
        <begin position="1"/>
        <end position="244"/>
    </location>
</feature>